<sequence>MVVKVGINGFGRIGRIVFRNAVEHDDVEIVAVNDPFIETKYAAYMLKYDSTHGQFKGDIQHSSSNNLTVNNKTIHFYQERDPANIPWGKHGVDYVVESTGVFTTTEKAKAHLSGGAKKVIISAPSADAPMFVMGVNEKSYRPDISVLSNASCTTNCLAPLAKVIHDNFGIAEGLMTTIHSYTATQKTVDGPSHKDWRGGRTAAQNIIPSSTGAAKAVGKVIPALNGKLTGMAMRVPTANVSVVDLTCRTEKPVTYDQIKAAVKAASEGELKGILGYSEDALVSTDLNGDPRSSIFDASAGIALNDRFVKLISWYDNEWGYSRRVLDLIAYIAKVDAGK</sequence>
<name>G3P_PARBA</name>
<reference key="1">
    <citation type="journal article" date="2004" name="Fungal Genet. Biol.">
        <title>The glyceraldehyde-3-phosphate dehydrogenase homologue is differentially regulated in phases of Paracoccidioides brasiliensis: molecular and phylogenetic analysis.</title>
        <authorList>
            <person name="Barbosa M.S."/>
            <person name="Cunha Passos D.A."/>
            <person name="Felipe M.S.S."/>
            <person name="Jesuino R.S.A."/>
            <person name="Pereira M."/>
            <person name="de Almeida Soares C.M."/>
        </authorList>
    </citation>
    <scope>NUCLEOTIDE SEQUENCE [GENOMIC DNA / MRNA]</scope>
    <scope>PROTEIN SEQUENCE OF 1-16; 90-107 AND 120-138</scope>
    <scope>INDUCTION</scope>
</reference>
<reference key="2">
    <citation type="journal article" date="2011" name="PLoS Genet.">
        <title>Comparative genomic analysis of human fungal pathogens causing paracoccidioidomycosis.</title>
        <authorList>
            <person name="Desjardins C.A."/>
            <person name="Champion M.D."/>
            <person name="Holder J.W."/>
            <person name="Muszewska A."/>
            <person name="Goldberg J."/>
            <person name="Bailao A.M."/>
            <person name="Brigido M.M."/>
            <person name="Ferreira M.E."/>
            <person name="Garcia A.M."/>
            <person name="Grynberg M."/>
            <person name="Gujja S."/>
            <person name="Heiman D.I."/>
            <person name="Henn M.R."/>
            <person name="Kodira C.D."/>
            <person name="Leon-Narvaez H."/>
            <person name="Longo L.V.G."/>
            <person name="Ma L.-J."/>
            <person name="Malavazi I."/>
            <person name="Matsuo A.L."/>
            <person name="Morais F.V."/>
            <person name="Pereira M."/>
            <person name="Rodriguez-Brito S."/>
            <person name="Sakthikumar S."/>
            <person name="Salem-Izacc S.M."/>
            <person name="Sykes S.M."/>
            <person name="Teixeira M.M."/>
            <person name="Vallejo M.C."/>
            <person name="Walter M.E."/>
            <person name="Yandava C."/>
            <person name="Young S."/>
            <person name="Zeng Q."/>
            <person name="Zucker J."/>
            <person name="Felipe M.S."/>
            <person name="Goldman G.H."/>
            <person name="Haas B.J."/>
            <person name="McEwen J.G."/>
            <person name="Nino-Vega G."/>
            <person name="Puccia R."/>
            <person name="San-Blas G."/>
            <person name="Soares C.M."/>
            <person name="Birren B.W."/>
            <person name="Cuomo C.A."/>
        </authorList>
    </citation>
    <scope>NUCLEOTIDE SEQUENCE [LARGE SCALE GENOMIC DNA]</scope>
    <source>
        <strain>ATCC MYA-826 / Pb01</strain>
    </source>
</reference>
<reference key="3">
    <citation type="journal article" date="2001" name="Microbes Infect.">
        <title>Two-dimensional electrophoresis and characterization of antigens from Paracoccidioides brasiliensis.</title>
        <authorList>
            <person name="da Fonseca C.A."/>
            <person name="Jesuino R.S.A."/>
            <person name="Felipe M.S.S."/>
            <person name="Cunha D.A."/>
            <person name="Brito W.A."/>
            <person name="de Almeida Soares C.M."/>
        </authorList>
    </citation>
    <scope>PROTEIN SEQUENCE OF 2-16</scope>
    <scope>INDUCTION</scope>
</reference>
<evidence type="ECO:0000250" key="1"/>
<evidence type="ECO:0000255" key="2">
    <source>
        <dbReference type="PROSITE-ProRule" id="PRU10009"/>
    </source>
</evidence>
<evidence type="ECO:0000269" key="3">
    <source>
    </source>
</evidence>
<evidence type="ECO:0000269" key="4">
    <source>
    </source>
</evidence>
<evidence type="ECO:0000305" key="5"/>
<evidence type="ECO:0007829" key="6">
    <source>
        <dbReference type="PDB" id="8DE5"/>
    </source>
</evidence>
<feature type="initiator methionine" description="Removed; partial" evidence="3">
    <location>
        <position position="1"/>
    </location>
</feature>
<feature type="chain" id="PRO_0000145565" description="Glyceraldehyde-3-phosphate dehydrogenase">
    <location>
        <begin position="2"/>
        <end position="338"/>
    </location>
</feature>
<feature type="active site" description="Nucleophile" evidence="2">
    <location>
        <position position="152"/>
    </location>
</feature>
<feature type="binding site" evidence="1">
    <location>
        <begin position="12"/>
        <end position="13"/>
    </location>
    <ligand>
        <name>NAD(+)</name>
        <dbReference type="ChEBI" id="CHEBI:57540"/>
    </ligand>
</feature>
<feature type="binding site" evidence="1">
    <location>
        <position position="34"/>
    </location>
    <ligand>
        <name>NAD(+)</name>
        <dbReference type="ChEBI" id="CHEBI:57540"/>
    </ligand>
</feature>
<feature type="binding site" evidence="1">
    <location>
        <position position="80"/>
    </location>
    <ligand>
        <name>NAD(+)</name>
        <dbReference type="ChEBI" id="CHEBI:57540"/>
    </ligand>
</feature>
<feature type="binding site" evidence="1">
    <location>
        <begin position="151"/>
        <end position="153"/>
    </location>
    <ligand>
        <name>D-glyceraldehyde 3-phosphate</name>
        <dbReference type="ChEBI" id="CHEBI:59776"/>
    </ligand>
</feature>
<feature type="binding site" evidence="1">
    <location>
        <position position="182"/>
    </location>
    <ligand>
        <name>D-glyceraldehyde 3-phosphate</name>
        <dbReference type="ChEBI" id="CHEBI:59776"/>
    </ligand>
</feature>
<feature type="binding site" evidence="1">
    <location>
        <begin position="211"/>
        <end position="212"/>
    </location>
    <ligand>
        <name>D-glyceraldehyde 3-phosphate</name>
        <dbReference type="ChEBI" id="CHEBI:59776"/>
    </ligand>
</feature>
<feature type="binding site" evidence="1">
    <location>
        <position position="234"/>
    </location>
    <ligand>
        <name>D-glyceraldehyde 3-phosphate</name>
        <dbReference type="ChEBI" id="CHEBI:59776"/>
    </ligand>
</feature>
<feature type="binding site" evidence="1">
    <location>
        <position position="316"/>
    </location>
    <ligand>
        <name>NAD(+)</name>
        <dbReference type="ChEBI" id="CHEBI:57540"/>
    </ligand>
</feature>
<feature type="site" description="Activates thiol group during catalysis" evidence="1">
    <location>
        <position position="179"/>
    </location>
</feature>
<feature type="strand" evidence="6">
    <location>
        <begin position="4"/>
        <end position="8"/>
    </location>
</feature>
<feature type="helix" evidence="6">
    <location>
        <begin position="12"/>
        <end position="22"/>
    </location>
</feature>
<feature type="strand" evidence="6">
    <location>
        <begin position="24"/>
        <end position="26"/>
    </location>
</feature>
<feature type="strand" evidence="6">
    <location>
        <begin position="28"/>
        <end position="33"/>
    </location>
</feature>
<feature type="helix" evidence="6">
    <location>
        <begin position="39"/>
        <end position="47"/>
    </location>
</feature>
<feature type="turn" evidence="6">
    <location>
        <begin position="50"/>
        <end position="52"/>
    </location>
</feature>
<feature type="strand" evidence="6">
    <location>
        <begin position="59"/>
        <end position="61"/>
    </location>
</feature>
<feature type="strand" evidence="6">
    <location>
        <begin position="63"/>
        <end position="71"/>
    </location>
</feature>
<feature type="strand" evidence="6">
    <location>
        <begin position="73"/>
        <end position="77"/>
    </location>
</feature>
<feature type="helix" evidence="6">
    <location>
        <begin position="82"/>
        <end position="84"/>
    </location>
</feature>
<feature type="helix" evidence="6">
    <location>
        <begin position="87"/>
        <end position="90"/>
    </location>
</feature>
<feature type="strand" evidence="6">
    <location>
        <begin position="94"/>
        <end position="97"/>
    </location>
</feature>
<feature type="strand" evidence="6">
    <location>
        <begin position="99"/>
        <end position="101"/>
    </location>
</feature>
<feature type="helix" evidence="6">
    <location>
        <begin position="105"/>
        <end position="108"/>
    </location>
</feature>
<feature type="helix" evidence="6">
    <location>
        <begin position="110"/>
        <end position="113"/>
    </location>
</feature>
<feature type="strand" evidence="6">
    <location>
        <begin position="117"/>
        <end position="123"/>
    </location>
</feature>
<feature type="strand" evidence="6">
    <location>
        <begin position="126"/>
        <end position="128"/>
    </location>
</feature>
<feature type="turn" evidence="6">
    <location>
        <begin position="133"/>
        <end position="135"/>
    </location>
</feature>
<feature type="helix" evidence="6">
    <location>
        <begin position="137"/>
        <end position="139"/>
    </location>
</feature>
<feature type="strand" evidence="6">
    <location>
        <begin position="146"/>
        <end position="148"/>
    </location>
</feature>
<feature type="helix" evidence="6">
    <location>
        <begin position="152"/>
        <end position="168"/>
    </location>
</feature>
<feature type="strand" evidence="6">
    <location>
        <begin position="170"/>
        <end position="180"/>
    </location>
</feature>
<feature type="strand" evidence="6">
    <location>
        <begin position="187"/>
        <end position="189"/>
    </location>
</feature>
<feature type="helix" evidence="6">
    <location>
        <begin position="197"/>
        <end position="199"/>
    </location>
</feature>
<feature type="helix" evidence="6">
    <location>
        <begin position="202"/>
        <end position="204"/>
    </location>
</feature>
<feature type="strand" evidence="6">
    <location>
        <begin position="207"/>
        <end position="210"/>
    </location>
</feature>
<feature type="helix" evidence="6">
    <location>
        <begin position="213"/>
        <end position="220"/>
    </location>
</feature>
<feature type="helix" evidence="6">
    <location>
        <begin position="222"/>
        <end position="224"/>
    </location>
</feature>
<feature type="strand" evidence="6">
    <location>
        <begin position="227"/>
        <end position="236"/>
    </location>
</feature>
<feature type="strand" evidence="6">
    <location>
        <begin position="241"/>
        <end position="251"/>
    </location>
</feature>
<feature type="helix" evidence="6">
    <location>
        <begin position="255"/>
        <end position="267"/>
    </location>
</feature>
<feature type="turn" evidence="6">
    <location>
        <begin position="268"/>
        <end position="273"/>
    </location>
</feature>
<feature type="strand" evidence="6">
    <location>
        <begin position="274"/>
        <end position="277"/>
    </location>
</feature>
<feature type="helix" evidence="6">
    <location>
        <begin position="283"/>
        <end position="286"/>
    </location>
</feature>
<feature type="strand" evidence="6">
    <location>
        <begin position="292"/>
        <end position="296"/>
    </location>
</feature>
<feature type="turn" evidence="6">
    <location>
        <begin position="297"/>
        <end position="299"/>
    </location>
</feature>
<feature type="strand" evidence="6">
    <location>
        <begin position="301"/>
        <end position="304"/>
    </location>
</feature>
<feature type="strand" evidence="6">
    <location>
        <begin position="307"/>
        <end position="314"/>
    </location>
</feature>
<feature type="helix" evidence="6">
    <location>
        <begin position="318"/>
        <end position="335"/>
    </location>
</feature>
<proteinExistence type="evidence at protein level"/>
<dbReference type="EC" id="1.2.1.12"/>
<dbReference type="EMBL" id="AF396657">
    <property type="protein sequence ID" value="AAP42760.1"/>
    <property type="molecule type" value="Genomic_DNA"/>
</dbReference>
<dbReference type="EMBL" id="AY061958">
    <property type="protein sequence ID" value="AAL34975.1"/>
    <property type="molecule type" value="mRNA"/>
</dbReference>
<dbReference type="EMBL" id="KN294026">
    <property type="protein sequence ID" value="EEH38741.2"/>
    <property type="status" value="ALT_SEQ"/>
    <property type="molecule type" value="Genomic_DNA"/>
</dbReference>
<dbReference type="RefSeq" id="XP_015701183.1">
    <property type="nucleotide sequence ID" value="XM_015846519.1"/>
</dbReference>
<dbReference type="PDB" id="8DE5">
    <property type="method" value="X-ray"/>
    <property type="resolution" value="2.02 A"/>
    <property type="chains" value="A=1-338"/>
</dbReference>
<dbReference type="PDBsum" id="8DE5"/>
<dbReference type="SMR" id="Q8X1X3"/>
<dbReference type="STRING" id="502779.Q8X1X3"/>
<dbReference type="MoonProt" id="Q8X1X3"/>
<dbReference type="GeneID" id="9092839"/>
<dbReference type="KEGG" id="pbl:PAAG_08468"/>
<dbReference type="eggNOG" id="KOG0657">
    <property type="taxonomic scope" value="Eukaryota"/>
</dbReference>
<dbReference type="HOGENOM" id="CLU_030140_0_1_1"/>
<dbReference type="OrthoDB" id="1152826at2759"/>
<dbReference type="BRENDA" id="1.2.1.12">
    <property type="organism ID" value="6937"/>
</dbReference>
<dbReference type="UniPathway" id="UPA00109">
    <property type="reaction ID" value="UER00184"/>
</dbReference>
<dbReference type="Proteomes" id="UP000002059">
    <property type="component" value="Partially assembled WGS sequence"/>
</dbReference>
<dbReference type="GO" id="GO:0005829">
    <property type="term" value="C:cytosol"/>
    <property type="evidence" value="ECO:0007669"/>
    <property type="project" value="TreeGrafter"/>
</dbReference>
<dbReference type="GO" id="GO:0004365">
    <property type="term" value="F:glyceraldehyde-3-phosphate dehydrogenase (NAD+) (phosphorylating) activity"/>
    <property type="evidence" value="ECO:0007669"/>
    <property type="project" value="UniProtKB-EC"/>
</dbReference>
<dbReference type="GO" id="GO:0051287">
    <property type="term" value="F:NAD binding"/>
    <property type="evidence" value="ECO:0007669"/>
    <property type="project" value="InterPro"/>
</dbReference>
<dbReference type="GO" id="GO:0050661">
    <property type="term" value="F:NADP binding"/>
    <property type="evidence" value="ECO:0007669"/>
    <property type="project" value="InterPro"/>
</dbReference>
<dbReference type="GO" id="GO:0006006">
    <property type="term" value="P:glucose metabolic process"/>
    <property type="evidence" value="ECO:0007669"/>
    <property type="project" value="InterPro"/>
</dbReference>
<dbReference type="GO" id="GO:0006096">
    <property type="term" value="P:glycolytic process"/>
    <property type="evidence" value="ECO:0007669"/>
    <property type="project" value="UniProtKB-UniPathway"/>
</dbReference>
<dbReference type="CDD" id="cd18126">
    <property type="entry name" value="GAPDH_I_C"/>
    <property type="match status" value="1"/>
</dbReference>
<dbReference type="CDD" id="cd05214">
    <property type="entry name" value="GAPDH_I_N"/>
    <property type="match status" value="1"/>
</dbReference>
<dbReference type="FunFam" id="3.30.360.10:FF:000001">
    <property type="entry name" value="Glyceraldehyde-3-phosphate dehydrogenase"/>
    <property type="match status" value="1"/>
</dbReference>
<dbReference type="FunFam" id="3.40.50.720:FF:000020">
    <property type="entry name" value="Glyceraldehyde-3-phosphate dehydrogenase"/>
    <property type="match status" value="1"/>
</dbReference>
<dbReference type="Gene3D" id="3.30.360.10">
    <property type="entry name" value="Dihydrodipicolinate Reductase, domain 2"/>
    <property type="match status" value="1"/>
</dbReference>
<dbReference type="Gene3D" id="3.40.50.720">
    <property type="entry name" value="NAD(P)-binding Rossmann-like Domain"/>
    <property type="match status" value="1"/>
</dbReference>
<dbReference type="InterPro" id="IPR020831">
    <property type="entry name" value="GlycerAld/Erythrose_P_DH"/>
</dbReference>
<dbReference type="InterPro" id="IPR020830">
    <property type="entry name" value="GlycerAld_3-P_DH_AS"/>
</dbReference>
<dbReference type="InterPro" id="IPR020829">
    <property type="entry name" value="GlycerAld_3-P_DH_cat"/>
</dbReference>
<dbReference type="InterPro" id="IPR020828">
    <property type="entry name" value="GlycerAld_3-P_DH_NAD(P)-bd"/>
</dbReference>
<dbReference type="InterPro" id="IPR006424">
    <property type="entry name" value="Glyceraldehyde-3-P_DH_1"/>
</dbReference>
<dbReference type="InterPro" id="IPR036291">
    <property type="entry name" value="NAD(P)-bd_dom_sf"/>
</dbReference>
<dbReference type="NCBIfam" id="TIGR01534">
    <property type="entry name" value="GAPDH-I"/>
    <property type="match status" value="1"/>
</dbReference>
<dbReference type="PANTHER" id="PTHR10836">
    <property type="entry name" value="GLYCERALDEHYDE 3-PHOSPHATE DEHYDROGENASE"/>
    <property type="match status" value="1"/>
</dbReference>
<dbReference type="PANTHER" id="PTHR10836:SF76">
    <property type="entry name" value="GLYCERALDEHYDE-3-PHOSPHATE DEHYDROGENASE-RELATED"/>
    <property type="match status" value="1"/>
</dbReference>
<dbReference type="Pfam" id="PF02800">
    <property type="entry name" value="Gp_dh_C"/>
    <property type="match status" value="1"/>
</dbReference>
<dbReference type="Pfam" id="PF00044">
    <property type="entry name" value="Gp_dh_N"/>
    <property type="match status" value="1"/>
</dbReference>
<dbReference type="PIRSF" id="PIRSF000149">
    <property type="entry name" value="GAP_DH"/>
    <property type="match status" value="1"/>
</dbReference>
<dbReference type="PRINTS" id="PR00078">
    <property type="entry name" value="G3PDHDRGNASE"/>
</dbReference>
<dbReference type="SMART" id="SM00846">
    <property type="entry name" value="Gp_dh_N"/>
    <property type="match status" value="1"/>
</dbReference>
<dbReference type="SUPFAM" id="SSF55347">
    <property type="entry name" value="Glyceraldehyde-3-phosphate dehydrogenase-like, C-terminal domain"/>
    <property type="match status" value="1"/>
</dbReference>
<dbReference type="SUPFAM" id="SSF51735">
    <property type="entry name" value="NAD(P)-binding Rossmann-fold domains"/>
    <property type="match status" value="1"/>
</dbReference>
<dbReference type="PROSITE" id="PS00071">
    <property type="entry name" value="GAPDH"/>
    <property type="match status" value="1"/>
</dbReference>
<accession>Q8X1X3</accession>
<accession>C1HCH7</accession>
<accession>Q6A547</accession>
<protein>
    <recommendedName>
        <fullName>Glyceraldehyde-3-phosphate dehydrogenase</fullName>
        <shortName>GAPDH</shortName>
        <ecNumber>1.2.1.12</ecNumber>
    </recommendedName>
</protein>
<keyword id="KW-0002">3D-structure</keyword>
<keyword id="KW-0963">Cytoplasm</keyword>
<keyword id="KW-0903">Direct protein sequencing</keyword>
<keyword id="KW-0324">Glycolysis</keyword>
<keyword id="KW-0520">NAD</keyword>
<keyword id="KW-0560">Oxidoreductase</keyword>
<keyword id="KW-1185">Reference proteome</keyword>
<organism>
    <name type="scientific">Paracoccidioides lutzii (strain ATCC MYA-826 / Pb01)</name>
    <name type="common">Paracoccidioides brasiliensis</name>
    <dbReference type="NCBI Taxonomy" id="502779"/>
    <lineage>
        <taxon>Eukaryota</taxon>
        <taxon>Fungi</taxon>
        <taxon>Dikarya</taxon>
        <taxon>Ascomycota</taxon>
        <taxon>Pezizomycotina</taxon>
        <taxon>Eurotiomycetes</taxon>
        <taxon>Eurotiomycetidae</taxon>
        <taxon>Onygenales</taxon>
        <taxon>Ajellomycetaceae</taxon>
        <taxon>Paracoccidioides</taxon>
    </lineage>
</organism>
<gene>
    <name type="primary">GPD</name>
    <name type="ORF">PAAG_08468</name>
</gene>
<comment type="catalytic activity">
    <reaction evidence="2">
        <text>D-glyceraldehyde 3-phosphate + phosphate + NAD(+) = (2R)-3-phospho-glyceroyl phosphate + NADH + H(+)</text>
        <dbReference type="Rhea" id="RHEA:10300"/>
        <dbReference type="ChEBI" id="CHEBI:15378"/>
        <dbReference type="ChEBI" id="CHEBI:43474"/>
        <dbReference type="ChEBI" id="CHEBI:57540"/>
        <dbReference type="ChEBI" id="CHEBI:57604"/>
        <dbReference type="ChEBI" id="CHEBI:57945"/>
        <dbReference type="ChEBI" id="CHEBI:59776"/>
        <dbReference type="EC" id="1.2.1.12"/>
    </reaction>
</comment>
<comment type="pathway">
    <text>Carbohydrate degradation; glycolysis; pyruvate from D-glyceraldehyde 3-phosphate: step 1/5.</text>
</comment>
<comment type="subunit">
    <text evidence="1">Homotetramer.</text>
</comment>
<comment type="subcellular location">
    <subcellularLocation>
        <location evidence="1">Cytoplasm</location>
    </subcellularLocation>
</comment>
<comment type="induction">
    <text evidence="3 4">Preferentially expressed in yeast cells, the host parasitic phase. Induced during mycelium to yeast transition and negatively regulated during the yeast to mycelium transition.</text>
</comment>
<comment type="similarity">
    <text evidence="5">Belongs to the glyceraldehyde-3-phosphate dehydrogenase family.</text>
</comment>
<comment type="sequence caution" evidence="5">
    <conflict type="erroneous gene model prediction">
        <sequence resource="EMBL-CDS" id="EEH38741"/>
    </conflict>
</comment>